<organism>
    <name type="scientific">Lycosa singoriensis</name>
    <name type="common">Wolf spider</name>
    <name type="synonym">Aranea singoriensis</name>
    <dbReference type="NCBI Taxonomy" id="434756"/>
    <lineage>
        <taxon>Eukaryota</taxon>
        <taxon>Metazoa</taxon>
        <taxon>Ecdysozoa</taxon>
        <taxon>Arthropoda</taxon>
        <taxon>Chelicerata</taxon>
        <taxon>Arachnida</taxon>
        <taxon>Araneae</taxon>
        <taxon>Araneomorphae</taxon>
        <taxon>Entelegynae</taxon>
        <taxon>Lycosoidea</taxon>
        <taxon>Lycosidae</taxon>
        <taxon>Lycosa</taxon>
    </lineage>
</organism>
<reference key="1">
    <citation type="journal article" date="2010" name="Zoology">
        <title>Transcriptome analysis of the venom glands of the Chinese wolf spider Lycosa singoriensis.</title>
        <authorList>
            <person name="Zhang Y."/>
            <person name="Chen J."/>
            <person name="Tang X."/>
            <person name="Wang F."/>
            <person name="Jiang L."/>
            <person name="Xiong X."/>
            <person name="Wang M."/>
            <person name="Rong M."/>
            <person name="Liu Z."/>
            <person name="Liang S."/>
        </authorList>
    </citation>
    <scope>NUCLEOTIDE SEQUENCE [LARGE SCALE MRNA]</scope>
    <source>
        <tissue>Venom gland</tissue>
    </source>
</reference>
<feature type="signal peptide" evidence="2">
    <location>
        <begin position="1"/>
        <end position="17"/>
    </location>
</feature>
<feature type="propeptide" id="PRO_0000401715" evidence="5">
    <location>
        <begin position="18"/>
        <end position="41"/>
    </location>
</feature>
<feature type="chain" id="PRO_0000401716" description="U2-lycotoxin-Ls1b" evidence="5">
    <location>
        <begin position="42"/>
        <end position="105"/>
    </location>
</feature>
<feature type="disulfide bond" evidence="1">
    <location>
        <begin position="51"/>
        <end position="67"/>
    </location>
</feature>
<feature type="disulfide bond" evidence="1">
    <location>
        <begin position="58"/>
        <end position="97"/>
    </location>
</feature>
<feature type="disulfide bond" evidence="1">
    <location>
        <begin position="60"/>
        <end position="83"/>
    </location>
</feature>
<feature type="disulfide bond" evidence="1">
    <location>
        <begin position="69"/>
        <end position="81"/>
    </location>
</feature>
<sequence length="105" mass="12141">MIKYVLISALLVVAVYSFTIEDNEDALLEEAEDELDTEEERRMALPPGAVCNGHKSDCQCFGAKYKCSCPFLWRFRRSAECHCKKGWAWTAIKKRSCHNRYQWSG</sequence>
<dbReference type="EMBL" id="EU926114">
    <property type="protein sequence ID" value="ACI41446.1"/>
    <property type="molecule type" value="mRNA"/>
</dbReference>
<dbReference type="EMBL" id="FM864118">
    <property type="protein sequence ID" value="CAS03715.1"/>
    <property type="molecule type" value="mRNA"/>
</dbReference>
<dbReference type="ArachnoServer" id="AS001053">
    <property type="toxin name" value="U2-lycotoxin-Ls1b"/>
</dbReference>
<dbReference type="GO" id="GO:0005576">
    <property type="term" value="C:extracellular region"/>
    <property type="evidence" value="ECO:0007669"/>
    <property type="project" value="UniProtKB-SubCell"/>
</dbReference>
<dbReference type="GO" id="GO:0015459">
    <property type="term" value="F:potassium channel regulator activity"/>
    <property type="evidence" value="ECO:0007669"/>
    <property type="project" value="UniProtKB-KW"/>
</dbReference>
<dbReference type="GO" id="GO:0090729">
    <property type="term" value="F:toxin activity"/>
    <property type="evidence" value="ECO:0007669"/>
    <property type="project" value="UniProtKB-KW"/>
</dbReference>
<dbReference type="InterPro" id="IPR013605">
    <property type="entry name" value="Toxin_34"/>
</dbReference>
<dbReference type="Pfam" id="PF08396">
    <property type="entry name" value="Toxin_34"/>
    <property type="match status" value="1"/>
</dbReference>
<evidence type="ECO:0000250" key="1">
    <source>
        <dbReference type="UniProtKB" id="C0HLR8"/>
    </source>
</evidence>
<evidence type="ECO:0000255" key="2"/>
<evidence type="ECO:0000303" key="3">
    <source>
    </source>
</evidence>
<evidence type="ECO:0000305" key="4"/>
<evidence type="ECO:0000305" key="5">
    <source>
    </source>
</evidence>
<proteinExistence type="inferred from homology"/>
<protein>
    <recommendedName>
        <fullName evidence="4">U2-lycotoxin-Ls1b</fullName>
        <shortName evidence="4">U2-LCTX-Ls1b</shortName>
    </recommendedName>
    <alternativeName>
        <fullName evidence="3">Toxin LSTX-M2</fullName>
    </alternativeName>
</protein>
<comment type="function">
    <text evidence="1">Insecticidal to house crickets. It induces an excitatory slow-onset impact that leads to irreversible spastic paralysis. It also modifies human voltage-gated potassium channel Kv1.5/KCNA5. Most likely, it binds to the voltage-sensing domain of the channel, suggesting it does not block the pore but prevents its opening at physiological membrane potentials. The recombinant peptide binds to the channel in an irreversible manner and slows down the hKv1.5 current activation kinetics. It is not toxic to mice, when intracranially injected (at 0.5 ug/g mouse).</text>
</comment>
<comment type="subcellular location">
    <subcellularLocation>
        <location evidence="5">Secreted</location>
    </subcellularLocation>
</comment>
<comment type="tissue specificity">
    <text evidence="5">Expressed by the venom gland.</text>
</comment>
<comment type="similarity">
    <text evidence="4">Belongs to the neurotoxin 04 (omega-agtx) family. 01 (type I omega-agtx) subfamily.</text>
</comment>
<accession>B6DD30</accession>
<keyword id="KW-1015">Disulfide bond</keyword>
<keyword id="KW-0872">Ion channel impairing toxin</keyword>
<keyword id="KW-0528">Neurotoxin</keyword>
<keyword id="KW-0632">Potassium channel impairing toxin</keyword>
<keyword id="KW-0964">Secreted</keyword>
<keyword id="KW-0732">Signal</keyword>
<keyword id="KW-0800">Toxin</keyword>
<keyword id="KW-1220">Voltage-gated potassium channel impairing toxin</keyword>
<name>TX2M2_LYCSI</name>